<proteinExistence type="evidence at transcript level"/>
<gene>
    <name type="primary">esr1</name>
    <name type="synonym">esr</name>
    <name type="synonym">nr3a1</name>
</gene>
<comment type="function">
    <text>The steroid hormones and their receptors are involved in the regulation of eukaryotic gene expression and affect cellular proliferation and differentiation in target tissues.</text>
</comment>
<comment type="subunit">
    <text evidence="1">Binds DNA as a homodimer. Can form a heterodimer with ER-beta (By similarity).</text>
</comment>
<comment type="subcellular location">
    <subcellularLocation>
        <location>Nucleus</location>
    </subcellularLocation>
</comment>
<comment type="domain">
    <text>Composed of three domains: a modulating N-terminal domain, a DNA-binding domain and a C-terminal ligand-binding domain.</text>
</comment>
<comment type="similarity">
    <text evidence="5">Belongs to the nuclear hormone receptor family. NR3 subfamily.</text>
</comment>
<protein>
    <recommendedName>
        <fullName>Estrogen receptor</fullName>
        <shortName>ER</shortName>
    </recommendedName>
    <alternativeName>
        <fullName>ER-alpha</fullName>
    </alternativeName>
    <alternativeName>
        <fullName>Estradiol receptor</fullName>
    </alternativeName>
    <alternativeName>
        <fullName>Nuclear receptor subfamily 3 group A member 1</fullName>
    </alternativeName>
</protein>
<dbReference type="EMBL" id="L20735">
    <property type="status" value="NOT_ANNOTATED_CDS"/>
    <property type="molecule type" value="mRNA"/>
</dbReference>
<dbReference type="PIR" id="A40907">
    <property type="entry name" value="QRXLE"/>
</dbReference>
<dbReference type="SMR" id="P81559"/>
<dbReference type="AGR" id="Xenbase:XB-GENE-864840"/>
<dbReference type="Xenbase" id="XB-GENE-864840">
    <property type="gene designation" value="esr1.L"/>
</dbReference>
<dbReference type="Proteomes" id="UP000186698">
    <property type="component" value="Unplaced"/>
</dbReference>
<dbReference type="GO" id="GO:0000785">
    <property type="term" value="C:chromatin"/>
    <property type="evidence" value="ECO:0000318"/>
    <property type="project" value="GO_Central"/>
</dbReference>
<dbReference type="GO" id="GO:0005737">
    <property type="term" value="C:cytoplasm"/>
    <property type="evidence" value="ECO:0000250"/>
    <property type="project" value="UniProtKB"/>
</dbReference>
<dbReference type="GO" id="GO:0005634">
    <property type="term" value="C:nucleus"/>
    <property type="evidence" value="ECO:0000250"/>
    <property type="project" value="UniProtKB"/>
</dbReference>
<dbReference type="GO" id="GO:0034056">
    <property type="term" value="F:estrogen response element binding"/>
    <property type="evidence" value="ECO:0000318"/>
    <property type="project" value="GO_Central"/>
</dbReference>
<dbReference type="GO" id="GO:0030284">
    <property type="term" value="F:nuclear estrogen receptor activity"/>
    <property type="evidence" value="ECO:0007669"/>
    <property type="project" value="InterPro"/>
</dbReference>
<dbReference type="GO" id="GO:0004879">
    <property type="term" value="F:nuclear receptor activity"/>
    <property type="evidence" value="ECO:0000318"/>
    <property type="project" value="GO_Central"/>
</dbReference>
<dbReference type="GO" id="GO:0005496">
    <property type="term" value="F:steroid binding"/>
    <property type="evidence" value="ECO:0007669"/>
    <property type="project" value="UniProtKB-KW"/>
</dbReference>
<dbReference type="GO" id="GO:0008270">
    <property type="term" value="F:zinc ion binding"/>
    <property type="evidence" value="ECO:0007669"/>
    <property type="project" value="UniProtKB-KW"/>
</dbReference>
<dbReference type="GO" id="GO:0071391">
    <property type="term" value="P:cellular response to estrogen stimulus"/>
    <property type="evidence" value="ECO:0000318"/>
    <property type="project" value="GO_Central"/>
</dbReference>
<dbReference type="GO" id="GO:0030520">
    <property type="term" value="P:estrogen receptor signaling pathway"/>
    <property type="evidence" value="ECO:0000318"/>
    <property type="project" value="GO_Central"/>
</dbReference>
<dbReference type="GO" id="GO:0070986">
    <property type="term" value="P:left/right axis specification"/>
    <property type="evidence" value="ECO:0000315"/>
    <property type="project" value="Xenbase"/>
</dbReference>
<dbReference type="GO" id="GO:0006357">
    <property type="term" value="P:regulation of transcription by RNA polymerase II"/>
    <property type="evidence" value="ECO:0000318"/>
    <property type="project" value="GO_Central"/>
</dbReference>
<dbReference type="CDD" id="cd07171">
    <property type="entry name" value="NR_DBD_ER"/>
    <property type="match status" value="1"/>
</dbReference>
<dbReference type="CDD" id="cd06949">
    <property type="entry name" value="NR_LBD_ER"/>
    <property type="match status" value="1"/>
</dbReference>
<dbReference type="FunFam" id="1.10.565.10:FF:000010">
    <property type="entry name" value="Estrogen receptor"/>
    <property type="match status" value="1"/>
</dbReference>
<dbReference type="FunFam" id="3.30.50.10:FF:000014">
    <property type="entry name" value="Estrogen receptor beta"/>
    <property type="match status" value="1"/>
</dbReference>
<dbReference type="Gene3D" id="3.30.50.10">
    <property type="entry name" value="Erythroid Transcription Factor GATA-1, subunit A"/>
    <property type="match status" value="1"/>
</dbReference>
<dbReference type="Gene3D" id="1.10.565.10">
    <property type="entry name" value="Retinoid X Receptor"/>
    <property type="match status" value="1"/>
</dbReference>
<dbReference type="InterPro" id="IPR024178">
    <property type="entry name" value="Est_rcpt/est-rel_rcp"/>
</dbReference>
<dbReference type="InterPro" id="IPR001292">
    <property type="entry name" value="Estr_rcpt"/>
</dbReference>
<dbReference type="InterPro" id="IPR046944">
    <property type="entry name" value="Estr_rcpt_N"/>
</dbReference>
<dbReference type="InterPro" id="IPR035500">
    <property type="entry name" value="NHR-like_dom_sf"/>
</dbReference>
<dbReference type="InterPro" id="IPR000536">
    <property type="entry name" value="Nucl_hrmn_rcpt_lig-bd"/>
</dbReference>
<dbReference type="InterPro" id="IPR050200">
    <property type="entry name" value="Nuclear_hormone_rcpt_NR3"/>
</dbReference>
<dbReference type="InterPro" id="IPR001723">
    <property type="entry name" value="Nuclear_hrmn_rcpt"/>
</dbReference>
<dbReference type="InterPro" id="IPR001628">
    <property type="entry name" value="Znf_hrmn_rcpt"/>
</dbReference>
<dbReference type="InterPro" id="IPR013088">
    <property type="entry name" value="Znf_NHR/GATA"/>
</dbReference>
<dbReference type="PANTHER" id="PTHR48092">
    <property type="entry name" value="KNIRPS-RELATED PROTEIN-RELATED"/>
    <property type="match status" value="1"/>
</dbReference>
<dbReference type="Pfam" id="PF00104">
    <property type="entry name" value="Hormone_recep"/>
    <property type="match status" value="1"/>
</dbReference>
<dbReference type="Pfam" id="PF02159">
    <property type="entry name" value="Oest_recep"/>
    <property type="match status" value="1"/>
</dbReference>
<dbReference type="Pfam" id="PF00105">
    <property type="entry name" value="zf-C4"/>
    <property type="match status" value="1"/>
</dbReference>
<dbReference type="PIRSF" id="PIRSF500101">
    <property type="entry name" value="ER-a"/>
    <property type="match status" value="1"/>
</dbReference>
<dbReference type="PIRSF" id="PIRSF002527">
    <property type="entry name" value="ER-like_NR"/>
    <property type="match status" value="1"/>
</dbReference>
<dbReference type="PRINTS" id="PR00543">
    <property type="entry name" value="OESTROGENR"/>
</dbReference>
<dbReference type="PRINTS" id="PR00398">
    <property type="entry name" value="STRDHORMONER"/>
</dbReference>
<dbReference type="PRINTS" id="PR00047">
    <property type="entry name" value="STROIDFINGER"/>
</dbReference>
<dbReference type="SMART" id="SM00430">
    <property type="entry name" value="HOLI"/>
    <property type="match status" value="1"/>
</dbReference>
<dbReference type="SMART" id="SM00399">
    <property type="entry name" value="ZnF_C4"/>
    <property type="match status" value="1"/>
</dbReference>
<dbReference type="SUPFAM" id="SSF57716">
    <property type="entry name" value="Glucocorticoid receptor-like (DNA-binding domain)"/>
    <property type="match status" value="1"/>
</dbReference>
<dbReference type="SUPFAM" id="SSF48508">
    <property type="entry name" value="Nuclear receptor ligand-binding domain"/>
    <property type="match status" value="1"/>
</dbReference>
<dbReference type="PROSITE" id="PS51843">
    <property type="entry name" value="NR_LBD"/>
    <property type="match status" value="1"/>
</dbReference>
<dbReference type="PROSITE" id="PS00031">
    <property type="entry name" value="NUCLEAR_REC_DBD_1"/>
    <property type="match status" value="1"/>
</dbReference>
<dbReference type="PROSITE" id="PS51030">
    <property type="entry name" value="NUCLEAR_REC_DBD_2"/>
    <property type="match status" value="1"/>
</dbReference>
<accession>P81559</accession>
<sequence>MTMPLPNKTTGVTFLHQIQSSELETLTRPPLKISLERPLGEMYVENNRTGIFNYPEGTTYDFAAAAAPVYSSASLSYAASSETFGSSSLTGLHTLNNVPPSPVVFLAKLPQLSPFIHHHGQQVPYYLESEQGTFAVREAAPPTFYRSSSDNRRQSGRERMSSANDKGPPSMESTKETRYCAVCSDYASGYHYGVWSCEGCKAFFKRSIQGHNDYMCPATNQCTIDKNRRKSCQACRLRKCYEVGMMKGGIRKDRRGGRLLKHKRQKEEQEQKNDVDPSEIRTASIWVNPSVKSMKLSPVLSLTAEQLISALMEAEAPIVYSEHDSTKPLSEASMMTLLTNLADRELVHMINWAKRVPGFVDLTLHDQVHLLECAWLEILMVGLIWRSVEHPGKLSFAPNLLLDRNQGRCVEGLVEIFDMLVTTATRFRMMRLRGEEFICLKSIILLNSGVYTFLSSTLESLEDTDLIHIILDKIIDTLVHFMAKSGLSLQQQQRRLAQLLLILSHIRHMSNKGMEHLYSMKCKNVVPLYDLLLEMLDAHRIHTPKDKTTTQEEDSRSPPTTTVNGASPCLQPYYTNTEEVSLQSTV</sequence>
<organism>
    <name type="scientific">Xenopus laevis</name>
    <name type="common">African clawed frog</name>
    <dbReference type="NCBI Taxonomy" id="8355"/>
    <lineage>
        <taxon>Eukaryota</taxon>
        <taxon>Metazoa</taxon>
        <taxon>Chordata</taxon>
        <taxon>Craniata</taxon>
        <taxon>Vertebrata</taxon>
        <taxon>Euteleostomi</taxon>
        <taxon>Amphibia</taxon>
        <taxon>Batrachia</taxon>
        <taxon>Anura</taxon>
        <taxon>Pipoidea</taxon>
        <taxon>Pipidae</taxon>
        <taxon>Xenopodinae</taxon>
        <taxon>Xenopus</taxon>
        <taxon>Xenopus</taxon>
    </lineage>
</organism>
<reference key="1">
    <citation type="journal article" date="1987" name="Mol. Endocrinol.">
        <title>The Xenopus laevis estrogen receptor: sequence homology with human and avian receptors and identification of multiple estrogen receptor messenger ribonucleic acids.</title>
        <authorList>
            <person name="Weiler I.J."/>
            <person name="Lew D."/>
            <person name="Shapiro D.J."/>
        </authorList>
    </citation>
    <scope>NUCLEOTIDE SEQUENCE [MRNA]</scope>
</reference>
<keyword id="KW-0238">DNA-binding</keyword>
<keyword id="KW-0446">Lipid-binding</keyword>
<keyword id="KW-0479">Metal-binding</keyword>
<keyword id="KW-0539">Nucleus</keyword>
<keyword id="KW-0675">Receptor</keyword>
<keyword id="KW-1185">Reference proteome</keyword>
<keyword id="KW-0754">Steroid-binding</keyword>
<keyword id="KW-0804">Transcription</keyword>
<keyword id="KW-0805">Transcription regulation</keyword>
<keyword id="KW-0862">Zinc</keyword>
<keyword id="KW-0863">Zinc-finger</keyword>
<evidence type="ECO:0000250" key="1"/>
<evidence type="ECO:0000255" key="2">
    <source>
        <dbReference type="PROSITE-ProRule" id="PRU00407"/>
    </source>
</evidence>
<evidence type="ECO:0000255" key="3">
    <source>
        <dbReference type="PROSITE-ProRule" id="PRU01189"/>
    </source>
</evidence>
<evidence type="ECO:0000256" key="4">
    <source>
        <dbReference type="SAM" id="MobiDB-lite"/>
    </source>
</evidence>
<evidence type="ECO:0000305" key="5"/>
<feature type="chain" id="PRO_0000053639" description="Estrogen receptor">
    <location>
        <begin position="1"/>
        <end position="586"/>
    </location>
</feature>
<feature type="domain" description="NR LBD" evidence="3">
    <location>
        <begin position="303"/>
        <end position="539"/>
    </location>
</feature>
<feature type="DNA-binding region" description="Nuclear receptor" evidence="2">
    <location>
        <begin position="180"/>
        <end position="245"/>
    </location>
</feature>
<feature type="zinc finger region" description="NR C4-type" evidence="2">
    <location>
        <begin position="180"/>
        <end position="200"/>
    </location>
</feature>
<feature type="zinc finger region" description="NR C4-type" evidence="2">
    <location>
        <begin position="216"/>
        <end position="240"/>
    </location>
</feature>
<feature type="region of interest" description="Modulating">
    <location>
        <begin position="1"/>
        <end position="179"/>
    </location>
</feature>
<feature type="region of interest" description="Disordered" evidence="4">
    <location>
        <begin position="144"/>
        <end position="173"/>
    </location>
</feature>
<feature type="region of interest" description="Hinge">
    <location>
        <begin position="246"/>
        <end position="302"/>
    </location>
</feature>
<feature type="region of interest" description="Disordered" evidence="4">
    <location>
        <begin position="252"/>
        <end position="276"/>
    </location>
</feature>
<feature type="region of interest" description="Disordered" evidence="4">
    <location>
        <begin position="543"/>
        <end position="569"/>
    </location>
</feature>
<feature type="compositionally biased region" description="Basic and acidic residues" evidence="4">
    <location>
        <begin position="149"/>
        <end position="160"/>
    </location>
</feature>
<feature type="compositionally biased region" description="Basic residues" evidence="4">
    <location>
        <begin position="252"/>
        <end position="264"/>
    </location>
</feature>
<feature type="compositionally biased region" description="Basic and acidic residues" evidence="4">
    <location>
        <begin position="265"/>
        <end position="276"/>
    </location>
</feature>
<feature type="compositionally biased region" description="Basic and acidic residues" evidence="4">
    <location>
        <begin position="543"/>
        <end position="556"/>
    </location>
</feature>
<name>ESR1_XENLA</name>